<keyword id="KW-1003">Cell membrane</keyword>
<keyword id="KW-0285">Flavoprotein</keyword>
<keyword id="KW-0288">FMN</keyword>
<keyword id="KW-0472">Membrane</keyword>
<keyword id="KW-0560">Oxidoreductase</keyword>
<keyword id="KW-0665">Pyrimidine biosynthesis</keyword>
<reference key="1">
    <citation type="journal article" date="2007" name="PLoS Genet.">
        <title>Genome analysis of Minibacterium massiliensis highlights the convergent evolution of water-living bacteria.</title>
        <authorList>
            <person name="Audic S."/>
            <person name="Robert C."/>
            <person name="Campagna B."/>
            <person name="Parinello H."/>
            <person name="Claverie J.-M."/>
            <person name="Raoult D."/>
            <person name="Drancourt M."/>
        </authorList>
    </citation>
    <scope>NUCLEOTIDE SEQUENCE [LARGE SCALE GENOMIC DNA]</scope>
    <source>
        <strain>Marseille</strain>
    </source>
</reference>
<sequence>MSDKLLYTLARPFLFAIDPEAAHNLTLPALRRAAAMGLTSSIVKPAHDPRTVMGITFPNPVGLAAGLDKDGAYIDGLATLGFGSIEVGTVTPRAQPGNPMPRMFRLPKANAIINRMGFNNGGADAFVANVRSSKFYQNKEGVLGLNIGKNADTPIERAVDDYLICLEKVYPYASYVTVNISSPNTKNLRQLQGASELDALLSQLKEAQQRLSDQHKRYVPIALKIAPDMELEQIQTIAQALLRHKMDGVIATNTTVSREAVKGLKYAEETGGLSGAPVFEASNTVIRALKSELGDALPIIGVGGILSGNDAQAKIAAGASLVQLYTGLIYRGPALVKECAAALHA</sequence>
<dbReference type="EC" id="1.3.5.2" evidence="1"/>
<dbReference type="EMBL" id="CP000269">
    <property type="protein sequence ID" value="ABR88507.1"/>
    <property type="molecule type" value="Genomic_DNA"/>
</dbReference>
<dbReference type="RefSeq" id="WP_012080366.1">
    <property type="nucleotide sequence ID" value="NC_009659.1"/>
</dbReference>
<dbReference type="SMR" id="A6T106"/>
<dbReference type="STRING" id="375286.mma_2513"/>
<dbReference type="KEGG" id="mms:mma_2513"/>
<dbReference type="eggNOG" id="COG0167">
    <property type="taxonomic scope" value="Bacteria"/>
</dbReference>
<dbReference type="HOGENOM" id="CLU_013640_2_0_4"/>
<dbReference type="OrthoDB" id="9802377at2"/>
<dbReference type="UniPathway" id="UPA00070">
    <property type="reaction ID" value="UER00946"/>
</dbReference>
<dbReference type="Proteomes" id="UP000006388">
    <property type="component" value="Chromosome"/>
</dbReference>
<dbReference type="GO" id="GO:0005737">
    <property type="term" value="C:cytoplasm"/>
    <property type="evidence" value="ECO:0007669"/>
    <property type="project" value="InterPro"/>
</dbReference>
<dbReference type="GO" id="GO:0005886">
    <property type="term" value="C:plasma membrane"/>
    <property type="evidence" value="ECO:0007669"/>
    <property type="project" value="UniProtKB-SubCell"/>
</dbReference>
<dbReference type="GO" id="GO:0106430">
    <property type="term" value="F:dihydroorotate dehydrogenase (quinone) activity"/>
    <property type="evidence" value="ECO:0007669"/>
    <property type="project" value="UniProtKB-EC"/>
</dbReference>
<dbReference type="GO" id="GO:0006207">
    <property type="term" value="P:'de novo' pyrimidine nucleobase biosynthetic process"/>
    <property type="evidence" value="ECO:0007669"/>
    <property type="project" value="InterPro"/>
</dbReference>
<dbReference type="GO" id="GO:0044205">
    <property type="term" value="P:'de novo' UMP biosynthetic process"/>
    <property type="evidence" value="ECO:0007669"/>
    <property type="project" value="UniProtKB-UniRule"/>
</dbReference>
<dbReference type="CDD" id="cd04738">
    <property type="entry name" value="DHOD_2_like"/>
    <property type="match status" value="1"/>
</dbReference>
<dbReference type="FunFam" id="3.20.20.70:FF:000028">
    <property type="entry name" value="Dihydroorotate dehydrogenase (quinone)"/>
    <property type="match status" value="1"/>
</dbReference>
<dbReference type="Gene3D" id="3.20.20.70">
    <property type="entry name" value="Aldolase class I"/>
    <property type="match status" value="1"/>
</dbReference>
<dbReference type="HAMAP" id="MF_00225">
    <property type="entry name" value="DHO_dh_type2"/>
    <property type="match status" value="1"/>
</dbReference>
<dbReference type="InterPro" id="IPR013785">
    <property type="entry name" value="Aldolase_TIM"/>
</dbReference>
<dbReference type="InterPro" id="IPR050074">
    <property type="entry name" value="DHO_dehydrogenase"/>
</dbReference>
<dbReference type="InterPro" id="IPR012135">
    <property type="entry name" value="Dihydroorotate_DH_1_2"/>
</dbReference>
<dbReference type="InterPro" id="IPR005719">
    <property type="entry name" value="Dihydroorotate_DH_2"/>
</dbReference>
<dbReference type="InterPro" id="IPR005720">
    <property type="entry name" value="Dihydroorotate_DH_cat"/>
</dbReference>
<dbReference type="InterPro" id="IPR001295">
    <property type="entry name" value="Dihydroorotate_DH_CS"/>
</dbReference>
<dbReference type="NCBIfam" id="NF003644">
    <property type="entry name" value="PRK05286.1-1"/>
    <property type="match status" value="1"/>
</dbReference>
<dbReference type="NCBIfam" id="NF003645">
    <property type="entry name" value="PRK05286.1-2"/>
    <property type="match status" value="1"/>
</dbReference>
<dbReference type="NCBIfam" id="NF003646">
    <property type="entry name" value="PRK05286.1-4"/>
    <property type="match status" value="1"/>
</dbReference>
<dbReference type="NCBIfam" id="NF003652">
    <property type="entry name" value="PRK05286.2-5"/>
    <property type="match status" value="1"/>
</dbReference>
<dbReference type="NCBIfam" id="TIGR01036">
    <property type="entry name" value="pyrD_sub2"/>
    <property type="match status" value="1"/>
</dbReference>
<dbReference type="PANTHER" id="PTHR48109:SF4">
    <property type="entry name" value="DIHYDROOROTATE DEHYDROGENASE (QUINONE), MITOCHONDRIAL"/>
    <property type="match status" value="1"/>
</dbReference>
<dbReference type="PANTHER" id="PTHR48109">
    <property type="entry name" value="DIHYDROOROTATE DEHYDROGENASE (QUINONE), MITOCHONDRIAL-RELATED"/>
    <property type="match status" value="1"/>
</dbReference>
<dbReference type="Pfam" id="PF01180">
    <property type="entry name" value="DHO_dh"/>
    <property type="match status" value="1"/>
</dbReference>
<dbReference type="PIRSF" id="PIRSF000164">
    <property type="entry name" value="DHO_oxidase"/>
    <property type="match status" value="1"/>
</dbReference>
<dbReference type="SUPFAM" id="SSF51395">
    <property type="entry name" value="FMN-linked oxidoreductases"/>
    <property type="match status" value="1"/>
</dbReference>
<dbReference type="PROSITE" id="PS00911">
    <property type="entry name" value="DHODEHASE_1"/>
    <property type="match status" value="1"/>
</dbReference>
<dbReference type="PROSITE" id="PS00912">
    <property type="entry name" value="DHODEHASE_2"/>
    <property type="match status" value="1"/>
</dbReference>
<evidence type="ECO:0000255" key="1">
    <source>
        <dbReference type="HAMAP-Rule" id="MF_00225"/>
    </source>
</evidence>
<protein>
    <recommendedName>
        <fullName evidence="1">Dihydroorotate dehydrogenase (quinone)</fullName>
        <ecNumber evidence="1">1.3.5.2</ecNumber>
    </recommendedName>
    <alternativeName>
        <fullName evidence="1">DHOdehase</fullName>
        <shortName evidence="1">DHOD</shortName>
        <shortName evidence="1">DHODase</shortName>
    </alternativeName>
    <alternativeName>
        <fullName evidence="1">Dihydroorotate oxidase</fullName>
    </alternativeName>
</protein>
<proteinExistence type="inferred from homology"/>
<comment type="function">
    <text evidence="1">Catalyzes the conversion of dihydroorotate to orotate with quinone as electron acceptor.</text>
</comment>
<comment type="catalytic activity">
    <reaction evidence="1">
        <text>(S)-dihydroorotate + a quinone = orotate + a quinol</text>
        <dbReference type="Rhea" id="RHEA:30187"/>
        <dbReference type="ChEBI" id="CHEBI:24646"/>
        <dbReference type="ChEBI" id="CHEBI:30839"/>
        <dbReference type="ChEBI" id="CHEBI:30864"/>
        <dbReference type="ChEBI" id="CHEBI:132124"/>
        <dbReference type="EC" id="1.3.5.2"/>
    </reaction>
</comment>
<comment type="cofactor">
    <cofactor evidence="1">
        <name>FMN</name>
        <dbReference type="ChEBI" id="CHEBI:58210"/>
    </cofactor>
    <text evidence="1">Binds 1 FMN per subunit.</text>
</comment>
<comment type="pathway">
    <text evidence="1">Pyrimidine metabolism; UMP biosynthesis via de novo pathway; orotate from (S)-dihydroorotate (quinone route): step 1/1.</text>
</comment>
<comment type="subunit">
    <text evidence="1">Monomer.</text>
</comment>
<comment type="subcellular location">
    <subcellularLocation>
        <location evidence="1">Cell membrane</location>
        <topology evidence="1">Peripheral membrane protein</topology>
    </subcellularLocation>
</comment>
<comment type="similarity">
    <text evidence="1">Belongs to the dihydroorotate dehydrogenase family. Type 2 subfamily.</text>
</comment>
<feature type="chain" id="PRO_0000336471" description="Dihydroorotate dehydrogenase (quinone)">
    <location>
        <begin position="1"/>
        <end position="345"/>
    </location>
</feature>
<feature type="active site" description="Nucleophile" evidence="1">
    <location>
        <position position="182"/>
    </location>
</feature>
<feature type="binding site" evidence="1">
    <location>
        <begin position="65"/>
        <end position="69"/>
    </location>
    <ligand>
        <name>FMN</name>
        <dbReference type="ChEBI" id="CHEBI:58210"/>
    </ligand>
</feature>
<feature type="binding site" evidence="1">
    <location>
        <position position="69"/>
    </location>
    <ligand>
        <name>substrate</name>
    </ligand>
</feature>
<feature type="binding site" evidence="1">
    <location>
        <position position="89"/>
    </location>
    <ligand>
        <name>FMN</name>
        <dbReference type="ChEBI" id="CHEBI:58210"/>
    </ligand>
</feature>
<feature type="binding site" evidence="1">
    <location>
        <begin position="114"/>
        <end position="118"/>
    </location>
    <ligand>
        <name>substrate</name>
    </ligand>
</feature>
<feature type="binding site" evidence="1">
    <location>
        <position position="146"/>
    </location>
    <ligand>
        <name>FMN</name>
        <dbReference type="ChEBI" id="CHEBI:58210"/>
    </ligand>
</feature>
<feature type="binding site" evidence="1">
    <location>
        <position position="179"/>
    </location>
    <ligand>
        <name>FMN</name>
        <dbReference type="ChEBI" id="CHEBI:58210"/>
    </ligand>
</feature>
<feature type="binding site" evidence="1">
    <location>
        <position position="179"/>
    </location>
    <ligand>
        <name>substrate</name>
    </ligand>
</feature>
<feature type="binding site" evidence="1">
    <location>
        <position position="184"/>
    </location>
    <ligand>
        <name>substrate</name>
    </ligand>
</feature>
<feature type="binding site" evidence="1">
    <location>
        <position position="224"/>
    </location>
    <ligand>
        <name>FMN</name>
        <dbReference type="ChEBI" id="CHEBI:58210"/>
    </ligand>
</feature>
<feature type="binding site" evidence="1">
    <location>
        <position position="252"/>
    </location>
    <ligand>
        <name>FMN</name>
        <dbReference type="ChEBI" id="CHEBI:58210"/>
    </ligand>
</feature>
<feature type="binding site" evidence="1">
    <location>
        <begin position="253"/>
        <end position="254"/>
    </location>
    <ligand>
        <name>substrate</name>
    </ligand>
</feature>
<feature type="binding site" evidence="1">
    <location>
        <position position="275"/>
    </location>
    <ligand>
        <name>FMN</name>
        <dbReference type="ChEBI" id="CHEBI:58210"/>
    </ligand>
</feature>
<feature type="binding site" evidence="1">
    <location>
        <position position="304"/>
    </location>
    <ligand>
        <name>FMN</name>
        <dbReference type="ChEBI" id="CHEBI:58210"/>
    </ligand>
</feature>
<feature type="binding site" evidence="1">
    <location>
        <begin position="325"/>
        <end position="326"/>
    </location>
    <ligand>
        <name>FMN</name>
        <dbReference type="ChEBI" id="CHEBI:58210"/>
    </ligand>
</feature>
<accession>A6T106</accession>
<name>PYRD_JANMA</name>
<gene>
    <name evidence="1" type="primary">pyrD</name>
    <name type="ordered locus">mma_2513</name>
</gene>
<organism>
    <name type="scientific">Janthinobacterium sp. (strain Marseille)</name>
    <name type="common">Minibacterium massiliensis</name>
    <dbReference type="NCBI Taxonomy" id="375286"/>
    <lineage>
        <taxon>Bacteria</taxon>
        <taxon>Pseudomonadati</taxon>
        <taxon>Pseudomonadota</taxon>
        <taxon>Betaproteobacteria</taxon>
        <taxon>Burkholderiales</taxon>
        <taxon>Oxalobacteraceae</taxon>
        <taxon>Janthinobacterium</taxon>
    </lineage>
</organism>